<dbReference type="EMBL" id="CP000875">
    <property type="protein sequence ID" value="ABX02797.1"/>
    <property type="molecule type" value="Genomic_DNA"/>
</dbReference>
<dbReference type="SMR" id="A9B5H2"/>
<dbReference type="STRING" id="316274.Haur_0145"/>
<dbReference type="KEGG" id="hau:Haur_0145"/>
<dbReference type="eggNOG" id="COG0792">
    <property type="taxonomic scope" value="Bacteria"/>
</dbReference>
<dbReference type="HOGENOM" id="CLU_115353_2_1_0"/>
<dbReference type="InParanoid" id="A9B5H2"/>
<dbReference type="BioCyc" id="HAUR316274:GHYA-148-MONOMER"/>
<dbReference type="Proteomes" id="UP000000787">
    <property type="component" value="Chromosome"/>
</dbReference>
<dbReference type="GO" id="GO:0003676">
    <property type="term" value="F:nucleic acid binding"/>
    <property type="evidence" value="ECO:0007669"/>
    <property type="project" value="InterPro"/>
</dbReference>
<dbReference type="CDD" id="cd20736">
    <property type="entry name" value="PoNe_Nuclease"/>
    <property type="match status" value="1"/>
</dbReference>
<dbReference type="Gene3D" id="3.40.1350.10">
    <property type="match status" value="1"/>
</dbReference>
<dbReference type="HAMAP" id="MF_00048">
    <property type="entry name" value="UPF0102"/>
    <property type="match status" value="1"/>
</dbReference>
<dbReference type="InterPro" id="IPR011335">
    <property type="entry name" value="Restrct_endonuc-II-like"/>
</dbReference>
<dbReference type="InterPro" id="IPR011856">
    <property type="entry name" value="tRNA_endonuc-like_dom_sf"/>
</dbReference>
<dbReference type="InterPro" id="IPR003509">
    <property type="entry name" value="UPF0102_YraN-like"/>
</dbReference>
<dbReference type="NCBIfam" id="NF009150">
    <property type="entry name" value="PRK12497.1-3"/>
    <property type="match status" value="1"/>
</dbReference>
<dbReference type="NCBIfam" id="NF009154">
    <property type="entry name" value="PRK12497.3-3"/>
    <property type="match status" value="1"/>
</dbReference>
<dbReference type="PANTHER" id="PTHR34039">
    <property type="entry name" value="UPF0102 PROTEIN YRAN"/>
    <property type="match status" value="1"/>
</dbReference>
<dbReference type="PANTHER" id="PTHR34039:SF1">
    <property type="entry name" value="UPF0102 PROTEIN YRAN"/>
    <property type="match status" value="1"/>
</dbReference>
<dbReference type="Pfam" id="PF02021">
    <property type="entry name" value="UPF0102"/>
    <property type="match status" value="1"/>
</dbReference>
<dbReference type="SUPFAM" id="SSF52980">
    <property type="entry name" value="Restriction endonuclease-like"/>
    <property type="match status" value="1"/>
</dbReference>
<feature type="chain" id="PRO_1000091247" description="UPF0102 protein Haur_0145">
    <location>
        <begin position="1"/>
        <end position="124"/>
    </location>
</feature>
<name>Y145_HERA2</name>
<accession>A9B5H2</accession>
<proteinExistence type="inferred from homology"/>
<evidence type="ECO:0000255" key="1">
    <source>
        <dbReference type="HAMAP-Rule" id="MF_00048"/>
    </source>
</evidence>
<protein>
    <recommendedName>
        <fullName evidence="1">UPF0102 protein Haur_0145</fullName>
    </recommendedName>
</protein>
<comment type="similarity">
    <text evidence="1">Belongs to the UPF0102 family.</text>
</comment>
<reference key="1">
    <citation type="journal article" date="2011" name="Stand. Genomic Sci.">
        <title>Complete genome sequence of the filamentous gliding predatory bacterium Herpetosiphon aurantiacus type strain (114-95(T)).</title>
        <authorList>
            <person name="Kiss H."/>
            <person name="Nett M."/>
            <person name="Domin N."/>
            <person name="Martin K."/>
            <person name="Maresca J.A."/>
            <person name="Copeland A."/>
            <person name="Lapidus A."/>
            <person name="Lucas S."/>
            <person name="Berry K.W."/>
            <person name="Glavina Del Rio T."/>
            <person name="Dalin E."/>
            <person name="Tice H."/>
            <person name="Pitluck S."/>
            <person name="Richardson P."/>
            <person name="Bruce D."/>
            <person name="Goodwin L."/>
            <person name="Han C."/>
            <person name="Detter J.C."/>
            <person name="Schmutz J."/>
            <person name="Brettin T."/>
            <person name="Land M."/>
            <person name="Hauser L."/>
            <person name="Kyrpides N.C."/>
            <person name="Ivanova N."/>
            <person name="Goeker M."/>
            <person name="Woyke T."/>
            <person name="Klenk H.P."/>
            <person name="Bryant D.A."/>
        </authorList>
    </citation>
    <scope>NUCLEOTIDE SEQUENCE [LARGE SCALE GENOMIC DNA]</scope>
    <source>
        <strain>ATCC 23779 / DSM 785 / 114-95</strain>
    </source>
</reference>
<organism>
    <name type="scientific">Herpetosiphon aurantiacus (strain ATCC 23779 / DSM 785 / 114-95)</name>
    <dbReference type="NCBI Taxonomy" id="316274"/>
    <lineage>
        <taxon>Bacteria</taxon>
        <taxon>Bacillati</taxon>
        <taxon>Chloroflexota</taxon>
        <taxon>Chloroflexia</taxon>
        <taxon>Herpetosiphonales</taxon>
        <taxon>Herpetosiphonaceae</taxon>
        <taxon>Herpetosiphon</taxon>
    </lineage>
</organism>
<sequence>MADDRKALGRWGEQYAAEYLQQLGYQLIASGWHCRWGEIDLIAYDQATLVIIEVRTRRGTAHGSAAESLTLKKRQRLARLLQAYLQALDAAQTPWLGDYRIDAIAITLSRGQPQLEHFQAISIE</sequence>
<gene>
    <name type="ordered locus">Haur_0145</name>
</gene>